<comment type="similarity">
    <text evidence="1">Belongs to the Lactobacillus delbrueckii bacteriophages ORF4 protein family.</text>
</comment>
<protein>
    <recommendedName>
        <fullName>Uncharacterized protein ORF4</fullName>
    </recommendedName>
</protein>
<name>YG34_BPMV4</name>
<dbReference type="EMBL" id="L02497">
    <property type="protein sequence ID" value="AAA56849.1"/>
    <property type="molecule type" value="Genomic_DNA"/>
</dbReference>
<dbReference type="PIR" id="I45691">
    <property type="entry name" value="I45691"/>
</dbReference>
<reference key="1">
    <citation type="journal article" date="1993" name="J. Virol.">
        <title>Molecular comparison of the structural proteins encoding gene clusters of two related Lactobacillus delbrueckii bacteriophages.</title>
        <authorList>
            <person name="Vasala A."/>
            <person name="Dupont L."/>
            <person name="Baumann M."/>
            <person name="Ritzenthaler P."/>
            <person name="Alatossava T."/>
        </authorList>
    </citation>
    <scope>NUCLEOTIDE SEQUENCE [GENOMIC DNA]</scope>
</reference>
<organism>
    <name type="scientific">Lactococcus phage mv4</name>
    <name type="common">Lactococcus delbrueckii bacteriophage mv4</name>
    <dbReference type="NCBI Taxonomy" id="12392"/>
    <lineage>
        <taxon>Viruses</taxon>
    </lineage>
</organism>
<evidence type="ECO:0000305" key="1"/>
<feature type="chain" id="PRO_0000066224" description="Uncharacterized protein ORF4">
    <location>
        <begin position="1"/>
        <end position="144"/>
    </location>
</feature>
<organismHost>
    <name type="scientific">Lactobacillus delbrueckii</name>
    <dbReference type="NCBI Taxonomy" id="1584"/>
</organismHost>
<proteinExistence type="inferred from homology"/>
<sequence>MTAYLTISEFEKFGYELKKPDNFDKLLKSATVLINQVCSYYDPAFAYHDLEADSQADPGSYSFRQAMAFKKAVALEMVFLEDSGYSSAYEVRQGALSSFTVGHTSMSLNGSAGQNLTVGGTGVVNSAYNLLGRYGLIFSGVASS</sequence>
<accession>Q04774</accession>